<reference key="1">
    <citation type="journal article" date="2003" name="Proc. Natl. Acad. Sci. U.S.A.">
        <title>Complete genome sequence of the Q-fever pathogen, Coxiella burnetii.</title>
        <authorList>
            <person name="Seshadri R."/>
            <person name="Paulsen I.T."/>
            <person name="Eisen J.A."/>
            <person name="Read T.D."/>
            <person name="Nelson K.E."/>
            <person name="Nelson W.C."/>
            <person name="Ward N.L."/>
            <person name="Tettelin H."/>
            <person name="Davidsen T.M."/>
            <person name="Beanan M.J."/>
            <person name="DeBoy R.T."/>
            <person name="Daugherty S.C."/>
            <person name="Brinkac L.M."/>
            <person name="Madupu R."/>
            <person name="Dodson R.J."/>
            <person name="Khouri H.M."/>
            <person name="Lee K.H."/>
            <person name="Carty H.A."/>
            <person name="Scanlan D."/>
            <person name="Heinzen R.A."/>
            <person name="Thompson H.A."/>
            <person name="Samuel J.E."/>
            <person name="Fraser C.M."/>
            <person name="Heidelberg J.F."/>
        </authorList>
    </citation>
    <scope>NUCLEOTIDE SEQUENCE [LARGE SCALE GENOMIC DNA]</scope>
    <source>
        <strain>RSA 493 / Nine Mile phase I</strain>
    </source>
</reference>
<name>SYR_COXBU</name>
<protein>
    <recommendedName>
        <fullName evidence="1">Arginine--tRNA ligase</fullName>
        <ecNumber evidence="1">6.1.1.19</ecNumber>
    </recommendedName>
    <alternativeName>
        <fullName evidence="1">Arginyl-tRNA synthetase</fullName>
        <shortName evidence="1">ArgRS</shortName>
    </alternativeName>
</protein>
<keyword id="KW-0030">Aminoacyl-tRNA synthetase</keyword>
<keyword id="KW-0067">ATP-binding</keyword>
<keyword id="KW-0963">Cytoplasm</keyword>
<keyword id="KW-0436">Ligase</keyword>
<keyword id="KW-0547">Nucleotide-binding</keyword>
<keyword id="KW-0648">Protein biosynthesis</keyword>
<keyword id="KW-1185">Reference proteome</keyword>
<organism>
    <name type="scientific">Coxiella burnetii (strain RSA 493 / Nine Mile phase I)</name>
    <dbReference type="NCBI Taxonomy" id="227377"/>
    <lineage>
        <taxon>Bacteria</taxon>
        <taxon>Pseudomonadati</taxon>
        <taxon>Pseudomonadota</taxon>
        <taxon>Gammaproteobacteria</taxon>
        <taxon>Legionellales</taxon>
        <taxon>Coxiellaceae</taxon>
        <taxon>Coxiella</taxon>
    </lineage>
</organism>
<proteinExistence type="inferred from homology"/>
<comment type="catalytic activity">
    <reaction evidence="1">
        <text>tRNA(Arg) + L-arginine + ATP = L-arginyl-tRNA(Arg) + AMP + diphosphate</text>
        <dbReference type="Rhea" id="RHEA:20301"/>
        <dbReference type="Rhea" id="RHEA-COMP:9658"/>
        <dbReference type="Rhea" id="RHEA-COMP:9673"/>
        <dbReference type="ChEBI" id="CHEBI:30616"/>
        <dbReference type="ChEBI" id="CHEBI:32682"/>
        <dbReference type="ChEBI" id="CHEBI:33019"/>
        <dbReference type="ChEBI" id="CHEBI:78442"/>
        <dbReference type="ChEBI" id="CHEBI:78513"/>
        <dbReference type="ChEBI" id="CHEBI:456215"/>
        <dbReference type="EC" id="6.1.1.19"/>
    </reaction>
</comment>
<comment type="subunit">
    <text evidence="1">Monomer.</text>
</comment>
<comment type="subcellular location">
    <subcellularLocation>
        <location evidence="1">Cytoplasm</location>
    </subcellularLocation>
</comment>
<comment type="similarity">
    <text evidence="1">Belongs to the class-I aminoacyl-tRNA synthetase family.</text>
</comment>
<sequence>MIDLSTMKQQIETLLNQAIERLKTKGVLKPEVTPVIKITHTTDPQHGDFATNLALTLSKAAGMSPHALAEKIVEALPPSGQITEVEIAGPGFINFFVTEGSYQTVVSSILKAGKDYGRSEMGKGQRVHMEYVSANPTGPLHVGHGRGAAYGACVANLLNAAGFEVHREYYVNDAGRQMGILALSVWVRYLQGYEASIELPKNAYQGEYIIDIAEALKAKYGKQFYHSVESIQAKIPEEIDSNADPEAYLDVWVTAQKDLLGPKDFECVFQAALDSILNDIKNDLEEFGVTYDDWFPESRLVREGLIQEGLDLLTKHGYVYEKNGAQWFRATALGDEKDRVLIRKNGLPTYFAADVAYHLHKFNQGYDQIIDIFGADHHGYIPRIRGFLKGLGKAPEKLHILLVQFAILYRGNEKVSMSTRGGTFVTLRELRHEVGNDAARFFYIMRKPDQHLDFDLELAKSQSNENPVYYIQYAHARICSVFRQLKTTQKNWDRPRGMENLSLLSTNYEKELLATLGRYPEVIKRAAMNYAPHLLAHYLQTLANQFHTYYNAERFLIEDDNLRNARLNLINAVQQIIRNGLTLLGVSAPEEM</sequence>
<dbReference type="EC" id="6.1.1.19" evidence="1"/>
<dbReference type="EMBL" id="AE016828">
    <property type="protein sequence ID" value="AAO91497.1"/>
    <property type="molecule type" value="Genomic_DNA"/>
</dbReference>
<dbReference type="RefSeq" id="NP_820983.1">
    <property type="nucleotide sequence ID" value="NC_002971.4"/>
</dbReference>
<dbReference type="RefSeq" id="WP_010958595.1">
    <property type="nucleotide sequence ID" value="NC_002971.4"/>
</dbReference>
<dbReference type="SMR" id="Q83A98"/>
<dbReference type="STRING" id="227377.CBU_2008"/>
<dbReference type="EnsemblBacteria" id="AAO91497">
    <property type="protein sequence ID" value="AAO91497"/>
    <property type="gene ID" value="CBU_2008"/>
</dbReference>
<dbReference type="GeneID" id="1209921"/>
<dbReference type="KEGG" id="cbu:CBU_2008"/>
<dbReference type="PATRIC" id="fig|227377.7.peg.1997"/>
<dbReference type="eggNOG" id="COG0018">
    <property type="taxonomic scope" value="Bacteria"/>
</dbReference>
<dbReference type="HOGENOM" id="CLU_006406_0_1_6"/>
<dbReference type="OrthoDB" id="9803211at2"/>
<dbReference type="Proteomes" id="UP000002671">
    <property type="component" value="Chromosome"/>
</dbReference>
<dbReference type="GO" id="GO:0005737">
    <property type="term" value="C:cytoplasm"/>
    <property type="evidence" value="ECO:0007669"/>
    <property type="project" value="UniProtKB-SubCell"/>
</dbReference>
<dbReference type="GO" id="GO:0004814">
    <property type="term" value="F:arginine-tRNA ligase activity"/>
    <property type="evidence" value="ECO:0000318"/>
    <property type="project" value="GO_Central"/>
</dbReference>
<dbReference type="GO" id="GO:0005524">
    <property type="term" value="F:ATP binding"/>
    <property type="evidence" value="ECO:0007669"/>
    <property type="project" value="UniProtKB-UniRule"/>
</dbReference>
<dbReference type="GO" id="GO:0006420">
    <property type="term" value="P:arginyl-tRNA aminoacylation"/>
    <property type="evidence" value="ECO:0000318"/>
    <property type="project" value="GO_Central"/>
</dbReference>
<dbReference type="CDD" id="cd07956">
    <property type="entry name" value="Anticodon_Ia_Arg"/>
    <property type="match status" value="1"/>
</dbReference>
<dbReference type="CDD" id="cd00671">
    <property type="entry name" value="ArgRS_core"/>
    <property type="match status" value="1"/>
</dbReference>
<dbReference type="FunFam" id="1.10.730.10:FF:000008">
    <property type="entry name" value="Arginine--tRNA ligase"/>
    <property type="match status" value="1"/>
</dbReference>
<dbReference type="FunFam" id="3.30.1360.70:FF:000003">
    <property type="entry name" value="Arginine--tRNA ligase"/>
    <property type="match status" value="1"/>
</dbReference>
<dbReference type="Gene3D" id="3.30.1360.70">
    <property type="entry name" value="Arginyl tRNA synthetase N-terminal domain"/>
    <property type="match status" value="1"/>
</dbReference>
<dbReference type="Gene3D" id="3.40.50.620">
    <property type="entry name" value="HUPs"/>
    <property type="match status" value="1"/>
</dbReference>
<dbReference type="Gene3D" id="1.10.730.10">
    <property type="entry name" value="Isoleucyl-tRNA Synthetase, Domain 1"/>
    <property type="match status" value="1"/>
</dbReference>
<dbReference type="HAMAP" id="MF_00123">
    <property type="entry name" value="Arg_tRNA_synth"/>
    <property type="match status" value="1"/>
</dbReference>
<dbReference type="InterPro" id="IPR001412">
    <property type="entry name" value="aa-tRNA-synth_I_CS"/>
</dbReference>
<dbReference type="InterPro" id="IPR001278">
    <property type="entry name" value="Arg-tRNA-ligase"/>
</dbReference>
<dbReference type="InterPro" id="IPR005148">
    <property type="entry name" value="Arg-tRNA-synth_N"/>
</dbReference>
<dbReference type="InterPro" id="IPR036695">
    <property type="entry name" value="Arg-tRNA-synth_N_sf"/>
</dbReference>
<dbReference type="InterPro" id="IPR035684">
    <property type="entry name" value="ArgRS_core"/>
</dbReference>
<dbReference type="InterPro" id="IPR008909">
    <property type="entry name" value="DALR_anticod-bd"/>
</dbReference>
<dbReference type="InterPro" id="IPR014729">
    <property type="entry name" value="Rossmann-like_a/b/a_fold"/>
</dbReference>
<dbReference type="InterPro" id="IPR009080">
    <property type="entry name" value="tRNAsynth_Ia_anticodon-bd"/>
</dbReference>
<dbReference type="NCBIfam" id="TIGR00456">
    <property type="entry name" value="argS"/>
    <property type="match status" value="1"/>
</dbReference>
<dbReference type="PANTHER" id="PTHR11956:SF5">
    <property type="entry name" value="ARGININE--TRNA LIGASE, CYTOPLASMIC"/>
    <property type="match status" value="1"/>
</dbReference>
<dbReference type="PANTHER" id="PTHR11956">
    <property type="entry name" value="ARGINYL-TRNA SYNTHETASE"/>
    <property type="match status" value="1"/>
</dbReference>
<dbReference type="Pfam" id="PF03485">
    <property type="entry name" value="Arg_tRNA_synt_N"/>
    <property type="match status" value="1"/>
</dbReference>
<dbReference type="Pfam" id="PF05746">
    <property type="entry name" value="DALR_1"/>
    <property type="match status" value="1"/>
</dbReference>
<dbReference type="Pfam" id="PF00750">
    <property type="entry name" value="tRNA-synt_1d"/>
    <property type="match status" value="1"/>
</dbReference>
<dbReference type="PRINTS" id="PR01038">
    <property type="entry name" value="TRNASYNTHARG"/>
</dbReference>
<dbReference type="SMART" id="SM01016">
    <property type="entry name" value="Arg_tRNA_synt_N"/>
    <property type="match status" value="1"/>
</dbReference>
<dbReference type="SMART" id="SM00836">
    <property type="entry name" value="DALR_1"/>
    <property type="match status" value="1"/>
</dbReference>
<dbReference type="SUPFAM" id="SSF47323">
    <property type="entry name" value="Anticodon-binding domain of a subclass of class I aminoacyl-tRNA synthetases"/>
    <property type="match status" value="1"/>
</dbReference>
<dbReference type="SUPFAM" id="SSF55190">
    <property type="entry name" value="Arginyl-tRNA synthetase (ArgRS), N-terminal 'additional' domain"/>
    <property type="match status" value="1"/>
</dbReference>
<dbReference type="SUPFAM" id="SSF52374">
    <property type="entry name" value="Nucleotidylyl transferase"/>
    <property type="match status" value="1"/>
</dbReference>
<dbReference type="PROSITE" id="PS00178">
    <property type="entry name" value="AA_TRNA_LIGASE_I"/>
    <property type="match status" value="1"/>
</dbReference>
<gene>
    <name evidence="1" type="primary">argS</name>
    <name type="ordered locus">CBU_2008</name>
</gene>
<feature type="chain" id="PRO_0000151555" description="Arginine--tRNA ligase">
    <location>
        <begin position="1"/>
        <end position="592"/>
    </location>
</feature>
<feature type="short sequence motif" description="'HIGH' region">
    <location>
        <begin position="134"/>
        <end position="144"/>
    </location>
</feature>
<evidence type="ECO:0000255" key="1">
    <source>
        <dbReference type="HAMAP-Rule" id="MF_00123"/>
    </source>
</evidence>
<accession>Q83A98</accession>